<organism>
    <name type="scientific">Ruminiclostridium cellulolyticum (strain ATCC 35319 / DSM 5812 / JCM 6584 / H10)</name>
    <name type="common">Clostridium cellulolyticum</name>
    <dbReference type="NCBI Taxonomy" id="394503"/>
    <lineage>
        <taxon>Bacteria</taxon>
        <taxon>Bacillati</taxon>
        <taxon>Bacillota</taxon>
        <taxon>Clostridia</taxon>
        <taxon>Eubacteriales</taxon>
        <taxon>Oscillospiraceae</taxon>
        <taxon>Ruminiclostridium</taxon>
    </lineage>
</organism>
<evidence type="ECO:0000255" key="1">
    <source>
        <dbReference type="HAMAP-Rule" id="MF_01368"/>
    </source>
</evidence>
<evidence type="ECO:0000305" key="2"/>
<proteinExistence type="inferred from homology"/>
<gene>
    <name evidence="1" type="primary">rplQ</name>
    <name type="ordered locus">Ccel_0788</name>
</gene>
<sequence>MPGQRKLGRATDQRKAILKNLTTALFVSGRIETTEARAKEVKNIAEKLITLAIKEADNFTSKQVKVSAAKVDSKGKKLTDTKTSKNGKKYFVVEREQKTDMVSVDNASRLHARRLIMNWVYRPTTADGKNINITDKLFDEIAPKYKDKKGGYTRIYKLGPRRGDAAEMVILELV</sequence>
<dbReference type="EMBL" id="CP001348">
    <property type="protein sequence ID" value="ACL75166.1"/>
    <property type="molecule type" value="Genomic_DNA"/>
</dbReference>
<dbReference type="RefSeq" id="WP_015924328.1">
    <property type="nucleotide sequence ID" value="NC_011898.1"/>
</dbReference>
<dbReference type="SMR" id="B8I809"/>
<dbReference type="STRING" id="394503.Ccel_0788"/>
<dbReference type="KEGG" id="cce:Ccel_0788"/>
<dbReference type="eggNOG" id="COG0203">
    <property type="taxonomic scope" value="Bacteria"/>
</dbReference>
<dbReference type="HOGENOM" id="CLU_074407_2_2_9"/>
<dbReference type="OrthoDB" id="9809073at2"/>
<dbReference type="Proteomes" id="UP000001349">
    <property type="component" value="Chromosome"/>
</dbReference>
<dbReference type="GO" id="GO:0022625">
    <property type="term" value="C:cytosolic large ribosomal subunit"/>
    <property type="evidence" value="ECO:0007669"/>
    <property type="project" value="TreeGrafter"/>
</dbReference>
<dbReference type="GO" id="GO:0003735">
    <property type="term" value="F:structural constituent of ribosome"/>
    <property type="evidence" value="ECO:0007669"/>
    <property type="project" value="InterPro"/>
</dbReference>
<dbReference type="GO" id="GO:0006412">
    <property type="term" value="P:translation"/>
    <property type="evidence" value="ECO:0007669"/>
    <property type="project" value="UniProtKB-UniRule"/>
</dbReference>
<dbReference type="Gene3D" id="3.90.1030.10">
    <property type="entry name" value="Ribosomal protein L17"/>
    <property type="match status" value="1"/>
</dbReference>
<dbReference type="HAMAP" id="MF_01368">
    <property type="entry name" value="Ribosomal_bL17"/>
    <property type="match status" value="1"/>
</dbReference>
<dbReference type="InterPro" id="IPR000456">
    <property type="entry name" value="Ribosomal_bL17"/>
</dbReference>
<dbReference type="InterPro" id="IPR036373">
    <property type="entry name" value="Ribosomal_bL17_sf"/>
</dbReference>
<dbReference type="PANTHER" id="PTHR14413:SF16">
    <property type="entry name" value="LARGE RIBOSOMAL SUBUNIT PROTEIN BL17M"/>
    <property type="match status" value="1"/>
</dbReference>
<dbReference type="PANTHER" id="PTHR14413">
    <property type="entry name" value="RIBOSOMAL PROTEIN L17"/>
    <property type="match status" value="1"/>
</dbReference>
<dbReference type="Pfam" id="PF01196">
    <property type="entry name" value="Ribosomal_L17"/>
    <property type="match status" value="1"/>
</dbReference>
<dbReference type="SUPFAM" id="SSF64263">
    <property type="entry name" value="Prokaryotic ribosomal protein L17"/>
    <property type="match status" value="1"/>
</dbReference>
<feature type="chain" id="PRO_1000184012" description="Large ribosomal subunit protein bL17">
    <location>
        <begin position="1"/>
        <end position="174"/>
    </location>
</feature>
<comment type="subunit">
    <text evidence="1">Part of the 50S ribosomal subunit. Contacts protein L32.</text>
</comment>
<comment type="similarity">
    <text evidence="1">Belongs to the bacterial ribosomal protein bL17 family.</text>
</comment>
<protein>
    <recommendedName>
        <fullName evidence="1">Large ribosomal subunit protein bL17</fullName>
    </recommendedName>
    <alternativeName>
        <fullName evidence="2">50S ribosomal protein L17</fullName>
    </alternativeName>
</protein>
<name>RL17_RUMCH</name>
<accession>B8I809</accession>
<reference key="1">
    <citation type="submission" date="2009-01" db="EMBL/GenBank/DDBJ databases">
        <title>Complete sequence of Clostridium cellulolyticum H10.</title>
        <authorList>
            <consortium name="US DOE Joint Genome Institute"/>
            <person name="Lucas S."/>
            <person name="Copeland A."/>
            <person name="Lapidus A."/>
            <person name="Glavina del Rio T."/>
            <person name="Dalin E."/>
            <person name="Tice H."/>
            <person name="Bruce D."/>
            <person name="Goodwin L."/>
            <person name="Pitluck S."/>
            <person name="Chertkov O."/>
            <person name="Saunders E."/>
            <person name="Brettin T."/>
            <person name="Detter J.C."/>
            <person name="Han C."/>
            <person name="Larimer F."/>
            <person name="Land M."/>
            <person name="Hauser L."/>
            <person name="Kyrpides N."/>
            <person name="Ivanova N."/>
            <person name="Zhou J."/>
            <person name="Richardson P."/>
        </authorList>
    </citation>
    <scope>NUCLEOTIDE SEQUENCE [LARGE SCALE GENOMIC DNA]</scope>
    <source>
        <strain>ATCC 35319 / DSM 5812 / JCM 6584 / H10</strain>
    </source>
</reference>
<keyword id="KW-1185">Reference proteome</keyword>
<keyword id="KW-0687">Ribonucleoprotein</keyword>
<keyword id="KW-0689">Ribosomal protein</keyword>